<evidence type="ECO:0000255" key="1">
    <source>
        <dbReference type="HAMAP-Rule" id="MF_00093"/>
    </source>
</evidence>
<proteinExistence type="inferred from homology"/>
<organism>
    <name type="scientific">Acinetobacter baumannii (strain ACICU)</name>
    <dbReference type="NCBI Taxonomy" id="405416"/>
    <lineage>
        <taxon>Bacteria</taxon>
        <taxon>Pseudomonadati</taxon>
        <taxon>Pseudomonadota</taxon>
        <taxon>Gammaproteobacteria</taxon>
        <taxon>Moraxellales</taxon>
        <taxon>Moraxellaceae</taxon>
        <taxon>Acinetobacter</taxon>
        <taxon>Acinetobacter calcoaceticus/baumannii complex</taxon>
    </lineage>
</organism>
<protein>
    <recommendedName>
        <fullName evidence="1">Peptide chain release factor 1</fullName>
        <shortName evidence="1">RF-1</shortName>
    </recommendedName>
</protein>
<dbReference type="EMBL" id="CP000863">
    <property type="protein sequence ID" value="ACC57666.1"/>
    <property type="molecule type" value="Genomic_DNA"/>
</dbReference>
<dbReference type="RefSeq" id="WP_000648005.1">
    <property type="nucleotide sequence ID" value="NZ_CP031380.1"/>
</dbReference>
<dbReference type="SMR" id="B2HU82"/>
<dbReference type="GeneID" id="92894394"/>
<dbReference type="KEGG" id="abc:ACICU_02354"/>
<dbReference type="HOGENOM" id="CLU_036856_0_1_6"/>
<dbReference type="Proteomes" id="UP000008839">
    <property type="component" value="Chromosome"/>
</dbReference>
<dbReference type="GO" id="GO:0005737">
    <property type="term" value="C:cytoplasm"/>
    <property type="evidence" value="ECO:0007669"/>
    <property type="project" value="UniProtKB-SubCell"/>
</dbReference>
<dbReference type="GO" id="GO:0016149">
    <property type="term" value="F:translation release factor activity, codon specific"/>
    <property type="evidence" value="ECO:0007669"/>
    <property type="project" value="UniProtKB-UniRule"/>
</dbReference>
<dbReference type="FunFam" id="3.30.160.20:FF:000004">
    <property type="entry name" value="Peptide chain release factor 1"/>
    <property type="match status" value="1"/>
</dbReference>
<dbReference type="FunFam" id="3.30.70.1660:FF:000002">
    <property type="entry name" value="Peptide chain release factor 1"/>
    <property type="match status" value="1"/>
</dbReference>
<dbReference type="FunFam" id="3.30.70.1660:FF:000004">
    <property type="entry name" value="Peptide chain release factor 1"/>
    <property type="match status" value="1"/>
</dbReference>
<dbReference type="Gene3D" id="3.30.160.20">
    <property type="match status" value="1"/>
</dbReference>
<dbReference type="Gene3D" id="3.30.70.1660">
    <property type="match status" value="1"/>
</dbReference>
<dbReference type="Gene3D" id="6.10.140.1950">
    <property type="match status" value="1"/>
</dbReference>
<dbReference type="HAMAP" id="MF_00093">
    <property type="entry name" value="Rel_fac_1"/>
    <property type="match status" value="1"/>
</dbReference>
<dbReference type="InterPro" id="IPR005139">
    <property type="entry name" value="PCRF"/>
</dbReference>
<dbReference type="InterPro" id="IPR000352">
    <property type="entry name" value="Pep_chain_release_fac_I"/>
</dbReference>
<dbReference type="InterPro" id="IPR045853">
    <property type="entry name" value="Pep_chain_release_fac_I_sf"/>
</dbReference>
<dbReference type="InterPro" id="IPR050057">
    <property type="entry name" value="Prokaryotic/Mito_RF"/>
</dbReference>
<dbReference type="InterPro" id="IPR004373">
    <property type="entry name" value="RF-1"/>
</dbReference>
<dbReference type="NCBIfam" id="TIGR00019">
    <property type="entry name" value="prfA"/>
    <property type="match status" value="1"/>
</dbReference>
<dbReference type="NCBIfam" id="NF001859">
    <property type="entry name" value="PRK00591.1"/>
    <property type="match status" value="1"/>
</dbReference>
<dbReference type="PANTHER" id="PTHR43804">
    <property type="entry name" value="LD18447P"/>
    <property type="match status" value="1"/>
</dbReference>
<dbReference type="PANTHER" id="PTHR43804:SF7">
    <property type="entry name" value="LD18447P"/>
    <property type="match status" value="1"/>
</dbReference>
<dbReference type="Pfam" id="PF03462">
    <property type="entry name" value="PCRF"/>
    <property type="match status" value="1"/>
</dbReference>
<dbReference type="Pfam" id="PF00472">
    <property type="entry name" value="RF-1"/>
    <property type="match status" value="1"/>
</dbReference>
<dbReference type="SMART" id="SM00937">
    <property type="entry name" value="PCRF"/>
    <property type="match status" value="1"/>
</dbReference>
<dbReference type="SUPFAM" id="SSF75620">
    <property type="entry name" value="Release factor"/>
    <property type="match status" value="1"/>
</dbReference>
<dbReference type="PROSITE" id="PS00745">
    <property type="entry name" value="RF_PROK_I"/>
    <property type="match status" value="1"/>
</dbReference>
<feature type="chain" id="PRO_1000093412" description="Peptide chain release factor 1">
    <location>
        <begin position="1"/>
        <end position="362"/>
    </location>
</feature>
<feature type="modified residue" description="N5-methylglutamine" evidence="1">
    <location>
        <position position="235"/>
    </location>
</feature>
<gene>
    <name evidence="1" type="primary">prfA</name>
    <name type="ordered locus">ACICU_02354</name>
</gene>
<accession>B2HU82</accession>
<sequence length="362" mass="40585">MKASLRLRLDQLCDRHEELTALLADAEVISDNKRFRKLSREHSDLTEITEVWGKYRQAEEDIETAEMMKSDPDFKDMAEEEIQANKALLEELESQLNILMIPKDPNDSNAAYLEIRAGTGGDEAAIFSGDLFRMYSKYAESQGWRIEVLSENEGEHGGFKEVICRVDGDGVYGRLKFESGAHRVQRVPATESQGRVHTSACTVAILPEIDVDTNVEINPADLRIDTYRASGAGGQHINKTDSAVRITHIPTGTVVECQEERSQHKNKAKAMALLVSRLENAKRAAADAATSEMRRDLVGSGDRSERIRTYNYPQGRMTDHRINLTLYKLDAIMEGDLTELLDSLHREYQADQLAMLAQENGG</sequence>
<reference key="1">
    <citation type="journal article" date="2008" name="Antimicrob. Agents Chemother.">
        <title>Whole-genome pyrosequencing of an epidemic multidrug-resistant Acinetobacter baumannii strain belonging to the European clone II group.</title>
        <authorList>
            <person name="Iacono M."/>
            <person name="Villa L."/>
            <person name="Fortini D."/>
            <person name="Bordoni R."/>
            <person name="Imperi F."/>
            <person name="Bonnal R.J."/>
            <person name="Sicheritz-Ponten T."/>
            <person name="De Bellis G."/>
            <person name="Visca P."/>
            <person name="Cassone A."/>
            <person name="Carattoli A."/>
        </authorList>
    </citation>
    <scope>NUCLEOTIDE SEQUENCE [LARGE SCALE GENOMIC DNA]</scope>
    <source>
        <strain>ACICU</strain>
    </source>
</reference>
<name>RF1_ACIBC</name>
<comment type="function">
    <text evidence="1">Peptide chain release factor 1 directs the termination of translation in response to the peptide chain termination codons UAG and UAA.</text>
</comment>
<comment type="subcellular location">
    <subcellularLocation>
        <location evidence="1">Cytoplasm</location>
    </subcellularLocation>
</comment>
<comment type="PTM">
    <text evidence="1">Methylated by PrmC. Methylation increases the termination efficiency of RF1.</text>
</comment>
<comment type="similarity">
    <text evidence="1">Belongs to the prokaryotic/mitochondrial release factor family.</text>
</comment>
<keyword id="KW-0963">Cytoplasm</keyword>
<keyword id="KW-0488">Methylation</keyword>
<keyword id="KW-0648">Protein biosynthesis</keyword>